<name>NMT2_LOPWI</name>
<feature type="chain" id="PRO_0000462566" description="N-methyltransferase">
    <location>
        <begin position="1"/>
        <end position="353"/>
    </location>
</feature>
<feature type="binding site" evidence="1">
    <location>
        <position position="171"/>
    </location>
    <ligand>
        <name>S-adenosyl-L-homocysteine</name>
        <dbReference type="ChEBI" id="CHEBI:57856"/>
    </ligand>
</feature>
<feature type="binding site" evidence="1">
    <location>
        <position position="195"/>
    </location>
    <ligand>
        <name>S-adenosyl-L-homocysteine</name>
        <dbReference type="ChEBI" id="CHEBI:57856"/>
    </ligand>
</feature>
<feature type="binding site" evidence="1">
    <location>
        <position position="218"/>
    </location>
    <ligand>
        <name>S-adenosyl-L-homocysteine</name>
        <dbReference type="ChEBI" id="CHEBI:57856"/>
    </ligand>
</feature>
<feature type="binding site" evidence="2">
    <location>
        <position position="218"/>
    </location>
    <ligand>
        <name>S-adenosyl-L-methionine</name>
        <dbReference type="ChEBI" id="CHEBI:59789"/>
    </ligand>
</feature>
<feature type="binding site" evidence="1">
    <location>
        <position position="238"/>
    </location>
    <ligand>
        <name>S-adenosyl-L-homocysteine</name>
        <dbReference type="ChEBI" id="CHEBI:57856"/>
    </ligand>
</feature>
<feature type="binding site" evidence="1">
    <location>
        <position position="252"/>
    </location>
    <ligand>
        <name>S-adenosyl-L-homocysteine</name>
        <dbReference type="ChEBI" id="CHEBI:57856"/>
    </ligand>
</feature>
<organism>
    <name type="scientific">Lophophora williamsii</name>
    <name type="common">Peyote</name>
    <name type="synonym">Echinocactus williamsii</name>
    <dbReference type="NCBI Taxonomy" id="130138"/>
    <lineage>
        <taxon>Eukaryota</taxon>
        <taxon>Viridiplantae</taxon>
        <taxon>Streptophyta</taxon>
        <taxon>Embryophyta</taxon>
        <taxon>Tracheophyta</taxon>
        <taxon>Spermatophyta</taxon>
        <taxon>Magnoliopsida</taxon>
        <taxon>eudicotyledons</taxon>
        <taxon>Gunneridae</taxon>
        <taxon>Pentapetalae</taxon>
        <taxon>Caryophyllales</taxon>
        <taxon>Cactineae</taxon>
        <taxon>Cactaceae</taxon>
        <taxon>Cactoideae</taxon>
        <taxon>Cacteae</taxon>
        <taxon>Lophophora</taxon>
    </lineage>
</organism>
<reference evidence="5" key="1">
    <citation type="journal article" date="2023" name="Plant J.">
        <title>Elucidation of the mescaline biosynthetic pathway in peyote (Lophophora williamsii).</title>
        <authorList>
            <person name="Watkins J.L."/>
            <person name="Li Q."/>
            <person name="Yeaman S."/>
            <person name="Facchini P.J."/>
        </authorList>
    </citation>
    <scope>NUCLEOTIDE SEQUENCE [MRNA]</scope>
    <scope>FUNCTION</scope>
    <scope>CATALYTIC ACTIVITY</scope>
    <scope>BIOPHYSICOCHEMICAL PROPERTIES</scope>
    <scope>TISSUE SPECIFICITY</scope>
    <scope>PATHWAY</scope>
    <source>
        <strain>cv. Jourdaniana</strain>
    </source>
</reference>
<protein>
    <recommendedName>
        <fullName evidence="4">N-methyltransferase</fullName>
        <shortName evidence="4">LwNMT</shortName>
        <ecNumber evidence="2 3">2.1.1.27</ecNumber>
    </recommendedName>
    <alternativeName>
        <fullName evidence="4">O-methyltransferase 3</fullName>
        <shortName evidence="4">LwOMT3</shortName>
    </alternativeName>
</protein>
<gene>
    <name evidence="4" type="primary">NMT</name>
    <name evidence="4" type="synonym">OMT3</name>
</gene>
<sequence>MGNEEAFTFALAMATGSFANMVLRAVVELDVFEIMKRAGPGTHLSAAEIAAHLPTKNPDANAMLDRMLRVLAGYEVLSCSNRSLPNGQVERLYGLSPVSQFFTKSEDGASLAPLCLLNQDKVYWESWYHLKDAVLDGGIAFNRAHNLTLYEYAGIDDRFNKVFNDGMSGCSTTIMKKMVENYKGFEGVSTLVDVAGGIGKNLNMIISKYPTIKGINFDLPHVIKDAPRCRGVENIGGDMFISVPQGDAIFIKWICCDWNDEHCLKFLKNCYAALPDHGKVILYEFIFPKASETSYAARVILNIDAVTLATVVGGRIRTEAEFEALAKGAGFEGFKMAYSTSEVDAVMEFLKKK</sequence>
<dbReference type="EC" id="2.1.1.27" evidence="2 3"/>
<dbReference type="EMBL" id="OQ831038">
    <property type="protein sequence ID" value="WMX25281.1"/>
    <property type="molecule type" value="mRNA"/>
</dbReference>
<dbReference type="GO" id="GO:0008171">
    <property type="term" value="F:O-methyltransferase activity"/>
    <property type="evidence" value="ECO:0007669"/>
    <property type="project" value="InterPro"/>
</dbReference>
<dbReference type="GO" id="GO:0046983">
    <property type="term" value="F:protein dimerization activity"/>
    <property type="evidence" value="ECO:0007669"/>
    <property type="project" value="InterPro"/>
</dbReference>
<dbReference type="GO" id="GO:0032259">
    <property type="term" value="P:methylation"/>
    <property type="evidence" value="ECO:0007669"/>
    <property type="project" value="UniProtKB-KW"/>
</dbReference>
<dbReference type="FunFam" id="1.10.10.10:FF:000357">
    <property type="entry name" value="Caffeic acid 3-O-methyltransferase"/>
    <property type="match status" value="1"/>
</dbReference>
<dbReference type="FunFam" id="3.40.50.150:FF:000061">
    <property type="entry name" value="Caffeic acid O-methyltransferase"/>
    <property type="match status" value="1"/>
</dbReference>
<dbReference type="Gene3D" id="3.40.50.150">
    <property type="entry name" value="Vaccinia Virus protein VP39"/>
    <property type="match status" value="1"/>
</dbReference>
<dbReference type="Gene3D" id="1.10.10.10">
    <property type="entry name" value="Winged helix-like DNA-binding domain superfamily/Winged helix DNA-binding domain"/>
    <property type="match status" value="1"/>
</dbReference>
<dbReference type="InterPro" id="IPR016461">
    <property type="entry name" value="COMT-like"/>
</dbReference>
<dbReference type="InterPro" id="IPR001077">
    <property type="entry name" value="O_MeTrfase_dom"/>
</dbReference>
<dbReference type="InterPro" id="IPR012967">
    <property type="entry name" value="Plant_O-MeTrfase_dimerisation"/>
</dbReference>
<dbReference type="InterPro" id="IPR029063">
    <property type="entry name" value="SAM-dependent_MTases_sf"/>
</dbReference>
<dbReference type="InterPro" id="IPR036388">
    <property type="entry name" value="WH-like_DNA-bd_sf"/>
</dbReference>
<dbReference type="InterPro" id="IPR036390">
    <property type="entry name" value="WH_DNA-bd_sf"/>
</dbReference>
<dbReference type="PANTHER" id="PTHR11746">
    <property type="entry name" value="O-METHYLTRANSFERASE"/>
    <property type="match status" value="1"/>
</dbReference>
<dbReference type="Pfam" id="PF08100">
    <property type="entry name" value="Dimerisation"/>
    <property type="match status" value="1"/>
</dbReference>
<dbReference type="Pfam" id="PF00891">
    <property type="entry name" value="Methyltransf_2"/>
    <property type="match status" value="1"/>
</dbReference>
<dbReference type="PIRSF" id="PIRSF005739">
    <property type="entry name" value="O-mtase"/>
    <property type="match status" value="1"/>
</dbReference>
<dbReference type="SUPFAM" id="SSF53335">
    <property type="entry name" value="S-adenosyl-L-methionine-dependent methyltransferases"/>
    <property type="match status" value="1"/>
</dbReference>
<dbReference type="SUPFAM" id="SSF46785">
    <property type="entry name" value="Winged helix' DNA-binding domain"/>
    <property type="match status" value="1"/>
</dbReference>
<dbReference type="PROSITE" id="PS51683">
    <property type="entry name" value="SAM_OMT_II"/>
    <property type="match status" value="1"/>
</dbReference>
<keyword id="KW-0017">Alkaloid metabolism</keyword>
<keyword id="KW-0489">Methyltransferase</keyword>
<keyword id="KW-0949">S-adenosyl-L-methionine</keyword>
<keyword id="KW-0808">Transferase</keyword>
<accession>A0AA51VIL5</accession>
<proteinExistence type="evidence at protein level"/>
<comment type="function">
    <text evidence="3">N-methyltransferase participating in the biosynthesis of natural products derived from phenylethylamine, including mescaline, a natural hallucinogen potentially used in psychotherapeutic treatments (PubMed:37675639). Catalyzes the N-methylation of many substrates, including 3-methoxytyramine, 5-hydroxy-3,4-dimethoxyphenethylamine, 4-hydroxy-3,5-dimethoxyphenethylamine, tyramine and mescaline (PubMed:37675639).</text>
</comment>
<comment type="catalytic activity">
    <reaction evidence="3">
        <text>3-methoxytyramine + S-adenosyl-L-methionine = N-methyl-3-methoxytyramine + S-adenosyl-L-homocysteine + H(+)</text>
        <dbReference type="Rhea" id="RHEA:81003"/>
        <dbReference type="ChEBI" id="CHEBI:15378"/>
        <dbReference type="ChEBI" id="CHEBI:57856"/>
        <dbReference type="ChEBI" id="CHEBI:59789"/>
        <dbReference type="ChEBI" id="CHEBI:192089"/>
        <dbReference type="ChEBI" id="CHEBI:231773"/>
    </reaction>
    <physiologicalReaction direction="left-to-right" evidence="3">
        <dbReference type="Rhea" id="RHEA:81004"/>
    </physiologicalReaction>
</comment>
<comment type="catalytic activity">
    <reaction evidence="3">
        <text>mescaline + S-adenosyl-L-methionine = N-methylmescaline + S-adenosyl-L-homocysteine + H(+)</text>
        <dbReference type="Rhea" id="RHEA:81035"/>
        <dbReference type="ChEBI" id="CHEBI:15378"/>
        <dbReference type="ChEBI" id="CHEBI:57856"/>
        <dbReference type="ChEBI" id="CHEBI:59789"/>
        <dbReference type="ChEBI" id="CHEBI:231762"/>
        <dbReference type="ChEBI" id="CHEBI:231781"/>
    </reaction>
    <physiologicalReaction direction="left-to-right" evidence="3">
        <dbReference type="Rhea" id="RHEA:81036"/>
    </physiologicalReaction>
</comment>
<comment type="catalytic activity">
    <reaction evidence="3">
        <text>tyramine + S-adenosyl-L-methionine = N-methyltyramine + S-adenosyl-L-homocysteine + H(+)</text>
        <dbReference type="Rhea" id="RHEA:14865"/>
        <dbReference type="ChEBI" id="CHEBI:15378"/>
        <dbReference type="ChEBI" id="CHEBI:57856"/>
        <dbReference type="ChEBI" id="CHEBI:58155"/>
        <dbReference type="ChEBI" id="CHEBI:59789"/>
        <dbReference type="ChEBI" id="CHEBI:327995"/>
        <dbReference type="EC" id="2.1.1.27"/>
    </reaction>
    <physiologicalReaction direction="left-to-right" evidence="3">
        <dbReference type="Rhea" id="RHEA:14866"/>
    </physiologicalReaction>
</comment>
<comment type="catalytic activity">
    <reaction evidence="3">
        <text>4-hydroxy-3,5-dimethoxyphenethylamine + S-adenosyl-L-methionine = N-methyl-4-hydroxy-3,5-dimethoxyphenethylamine + S-adenosyl-L-homocysteine + H(+)</text>
        <dbReference type="Rhea" id="RHEA:81027"/>
        <dbReference type="ChEBI" id="CHEBI:15378"/>
        <dbReference type="ChEBI" id="CHEBI:57856"/>
        <dbReference type="ChEBI" id="CHEBI:59789"/>
        <dbReference type="ChEBI" id="CHEBI:231768"/>
        <dbReference type="ChEBI" id="CHEBI:231777"/>
    </reaction>
    <physiologicalReaction direction="left-to-right" evidence="3">
        <dbReference type="Rhea" id="RHEA:81028"/>
    </physiologicalReaction>
</comment>
<comment type="biophysicochemical properties">
    <kinetics>
        <KM evidence="3">16.5 uM for mescaline</KM>
        <KM evidence="3">29 uM for 4-hydroxy-3,5-dimethoxyphenethylamine</KM>
        <Vmax evidence="3">0.159 nmol/min/mg enzyme with mescaline as substrate</Vmax>
        <Vmax evidence="3">200.0 nmol/min/mg enzyme with 4-hydroxy-3,5-dimethoxyphenethylamine as substrate</Vmax>
        <text evidence="3">kcat is 0.0001 sec(-1) with mescaline as substrate (PubMed:37675639). kcat is 0.130 sec(-1) with 4-hydroxy-3,5-dimethoxyphenethylamine as substrate (PubMed:37675639).</text>
    </kinetics>
    <phDependence>
        <text evidence="3">Optimum pH is 9.</text>
    </phDependence>
    <temperatureDependence>
        <text evidence="3">Optimum temperature is 45 degrees Celsius.</text>
    </temperatureDependence>
</comment>
<comment type="pathway">
    <text evidence="3">Aromatic compound metabolism.</text>
</comment>
<comment type="pathway">
    <text evidence="3">Alkaloid biosynthesis.</text>
</comment>
<comment type="subunit">
    <text evidence="1">Homodimer.</text>
</comment>
<comment type="tissue specificity">
    <text evidence="3">Expressed at high levels in all tissues.</text>
</comment>
<comment type="similarity">
    <text evidence="2">Belongs to the class I-like SAM-binding methyltransferase superfamily. Cation-independent O-methyltransferase family.</text>
</comment>
<evidence type="ECO:0000250" key="1">
    <source>
        <dbReference type="UniProtKB" id="A0A166U5H3"/>
    </source>
</evidence>
<evidence type="ECO:0000255" key="2">
    <source>
        <dbReference type="PROSITE-ProRule" id="PRU01020"/>
    </source>
</evidence>
<evidence type="ECO:0000269" key="3">
    <source>
    </source>
</evidence>
<evidence type="ECO:0000303" key="4">
    <source>
    </source>
</evidence>
<evidence type="ECO:0000312" key="5">
    <source>
        <dbReference type="EMBL" id="WMX25281.1"/>
    </source>
</evidence>